<feature type="chain" id="PRO_0000236766" description="Tyrosine--tRNA ligase">
    <location>
        <begin position="1"/>
        <end position="413"/>
    </location>
</feature>
<feature type="domain" description="S4 RNA-binding" evidence="1">
    <location>
        <begin position="346"/>
        <end position="410"/>
    </location>
</feature>
<feature type="short sequence motif" description="'HIGH' region">
    <location>
        <begin position="55"/>
        <end position="64"/>
    </location>
</feature>
<feature type="short sequence motif" description="'KMSKS' region">
    <location>
        <begin position="242"/>
        <end position="246"/>
    </location>
</feature>
<feature type="binding site" evidence="1">
    <location>
        <position position="245"/>
    </location>
    <ligand>
        <name>ATP</name>
        <dbReference type="ChEBI" id="CHEBI:30616"/>
    </ligand>
</feature>
<evidence type="ECO:0000255" key="1">
    <source>
        <dbReference type="HAMAP-Rule" id="MF_02007"/>
    </source>
</evidence>
<comment type="function">
    <text evidence="1">Catalyzes the attachment of tyrosine to tRNA(Tyr) in a two-step reaction: tyrosine is first activated by ATP to form Tyr-AMP and then transferred to the acceptor end of tRNA(Tyr).</text>
</comment>
<comment type="catalytic activity">
    <reaction evidence="1">
        <text>tRNA(Tyr) + L-tyrosine + ATP = L-tyrosyl-tRNA(Tyr) + AMP + diphosphate + H(+)</text>
        <dbReference type="Rhea" id="RHEA:10220"/>
        <dbReference type="Rhea" id="RHEA-COMP:9706"/>
        <dbReference type="Rhea" id="RHEA-COMP:9707"/>
        <dbReference type="ChEBI" id="CHEBI:15378"/>
        <dbReference type="ChEBI" id="CHEBI:30616"/>
        <dbReference type="ChEBI" id="CHEBI:33019"/>
        <dbReference type="ChEBI" id="CHEBI:58315"/>
        <dbReference type="ChEBI" id="CHEBI:78442"/>
        <dbReference type="ChEBI" id="CHEBI:78536"/>
        <dbReference type="ChEBI" id="CHEBI:456215"/>
        <dbReference type="EC" id="6.1.1.1"/>
    </reaction>
</comment>
<comment type="subunit">
    <text evidence="1">Homodimer.</text>
</comment>
<comment type="subcellular location">
    <subcellularLocation>
        <location evidence="1">Cytoplasm</location>
    </subcellularLocation>
</comment>
<comment type="similarity">
    <text evidence="1">Belongs to the class-I aminoacyl-tRNA synthetase family. TyrS type 2 subfamily.</text>
</comment>
<reference key="1">
    <citation type="journal article" date="2007" name="ISME J.">
        <title>Population level functional diversity in a microbial community revealed by comparative genomic and metagenomic analyses.</title>
        <authorList>
            <person name="Bhaya D."/>
            <person name="Grossman A.R."/>
            <person name="Steunou A.-S."/>
            <person name="Khuri N."/>
            <person name="Cohan F.M."/>
            <person name="Hamamura N."/>
            <person name="Melendrez M.C."/>
            <person name="Bateson M.M."/>
            <person name="Ward D.M."/>
            <person name="Heidelberg J.F."/>
        </authorList>
    </citation>
    <scope>NUCLEOTIDE SEQUENCE [LARGE SCALE GENOMIC DNA]</scope>
    <source>
        <strain>JA-2-3B'a(2-13)</strain>
    </source>
</reference>
<organism>
    <name type="scientific">Synechococcus sp. (strain JA-2-3B'a(2-13))</name>
    <name type="common">Cyanobacteria bacterium Yellowstone B-Prime</name>
    <dbReference type="NCBI Taxonomy" id="321332"/>
    <lineage>
        <taxon>Bacteria</taxon>
        <taxon>Bacillati</taxon>
        <taxon>Cyanobacteriota</taxon>
        <taxon>Cyanophyceae</taxon>
        <taxon>Synechococcales</taxon>
        <taxon>Synechococcaceae</taxon>
        <taxon>Synechococcus</taxon>
    </lineage>
</organism>
<name>SYY_SYNJB</name>
<dbReference type="EC" id="6.1.1.1" evidence="1"/>
<dbReference type="EMBL" id="CP000240">
    <property type="protein sequence ID" value="ABD03444.1"/>
    <property type="molecule type" value="Genomic_DNA"/>
</dbReference>
<dbReference type="SMR" id="Q2JIV0"/>
<dbReference type="STRING" id="321332.CYB_2511"/>
<dbReference type="KEGG" id="cyb:CYB_2511"/>
<dbReference type="eggNOG" id="COG0162">
    <property type="taxonomic scope" value="Bacteria"/>
</dbReference>
<dbReference type="HOGENOM" id="CLU_024003_5_0_3"/>
<dbReference type="OrthoDB" id="9804243at2"/>
<dbReference type="Proteomes" id="UP000001938">
    <property type="component" value="Chromosome"/>
</dbReference>
<dbReference type="GO" id="GO:0005829">
    <property type="term" value="C:cytosol"/>
    <property type="evidence" value="ECO:0007669"/>
    <property type="project" value="TreeGrafter"/>
</dbReference>
<dbReference type="GO" id="GO:0005524">
    <property type="term" value="F:ATP binding"/>
    <property type="evidence" value="ECO:0007669"/>
    <property type="project" value="UniProtKB-UniRule"/>
</dbReference>
<dbReference type="GO" id="GO:0003723">
    <property type="term" value="F:RNA binding"/>
    <property type="evidence" value="ECO:0007669"/>
    <property type="project" value="UniProtKB-KW"/>
</dbReference>
<dbReference type="GO" id="GO:0004831">
    <property type="term" value="F:tyrosine-tRNA ligase activity"/>
    <property type="evidence" value="ECO:0007669"/>
    <property type="project" value="UniProtKB-UniRule"/>
</dbReference>
<dbReference type="GO" id="GO:0006437">
    <property type="term" value="P:tyrosyl-tRNA aminoacylation"/>
    <property type="evidence" value="ECO:0007669"/>
    <property type="project" value="UniProtKB-UniRule"/>
</dbReference>
<dbReference type="CDD" id="cd00165">
    <property type="entry name" value="S4"/>
    <property type="match status" value="1"/>
</dbReference>
<dbReference type="CDD" id="cd00805">
    <property type="entry name" value="TyrRS_core"/>
    <property type="match status" value="1"/>
</dbReference>
<dbReference type="Gene3D" id="3.40.50.620">
    <property type="entry name" value="HUPs"/>
    <property type="match status" value="1"/>
</dbReference>
<dbReference type="Gene3D" id="3.10.290.10">
    <property type="entry name" value="RNA-binding S4 domain"/>
    <property type="match status" value="1"/>
</dbReference>
<dbReference type="Gene3D" id="1.10.240.10">
    <property type="entry name" value="Tyrosyl-Transfer RNA Synthetase"/>
    <property type="match status" value="1"/>
</dbReference>
<dbReference type="HAMAP" id="MF_02007">
    <property type="entry name" value="Tyr_tRNA_synth_type2"/>
    <property type="match status" value="1"/>
</dbReference>
<dbReference type="InterPro" id="IPR002305">
    <property type="entry name" value="aa-tRNA-synth_Ic"/>
</dbReference>
<dbReference type="InterPro" id="IPR014729">
    <property type="entry name" value="Rossmann-like_a/b/a_fold"/>
</dbReference>
<dbReference type="InterPro" id="IPR036986">
    <property type="entry name" value="S4_RNA-bd_sf"/>
</dbReference>
<dbReference type="InterPro" id="IPR054608">
    <property type="entry name" value="SYY-like_C"/>
</dbReference>
<dbReference type="InterPro" id="IPR002307">
    <property type="entry name" value="Tyr-tRNA-ligase"/>
</dbReference>
<dbReference type="InterPro" id="IPR024088">
    <property type="entry name" value="Tyr-tRNA-ligase_bac-type"/>
</dbReference>
<dbReference type="InterPro" id="IPR024108">
    <property type="entry name" value="Tyr-tRNA-ligase_bac_2"/>
</dbReference>
<dbReference type="NCBIfam" id="TIGR00234">
    <property type="entry name" value="tyrS"/>
    <property type="match status" value="1"/>
</dbReference>
<dbReference type="PANTHER" id="PTHR11766:SF1">
    <property type="entry name" value="TYROSINE--TRNA LIGASE"/>
    <property type="match status" value="1"/>
</dbReference>
<dbReference type="PANTHER" id="PTHR11766">
    <property type="entry name" value="TYROSYL-TRNA SYNTHETASE"/>
    <property type="match status" value="1"/>
</dbReference>
<dbReference type="Pfam" id="PF22421">
    <property type="entry name" value="SYY_C-terminal"/>
    <property type="match status" value="1"/>
</dbReference>
<dbReference type="Pfam" id="PF00579">
    <property type="entry name" value="tRNA-synt_1b"/>
    <property type="match status" value="1"/>
</dbReference>
<dbReference type="PRINTS" id="PR01040">
    <property type="entry name" value="TRNASYNTHTYR"/>
</dbReference>
<dbReference type="SUPFAM" id="SSF55174">
    <property type="entry name" value="Alpha-L RNA-binding motif"/>
    <property type="match status" value="1"/>
</dbReference>
<dbReference type="SUPFAM" id="SSF52374">
    <property type="entry name" value="Nucleotidylyl transferase"/>
    <property type="match status" value="1"/>
</dbReference>
<dbReference type="PROSITE" id="PS50889">
    <property type="entry name" value="S4"/>
    <property type="match status" value="1"/>
</dbReference>
<accession>Q2JIV0</accession>
<gene>
    <name evidence="1" type="primary">tyrS</name>
    <name type="ordered locus">CYB_2511</name>
</gene>
<sequence length="413" mass="45426">MSISSASVSPAYRDPLIAQIVERGVAEIFPGGAAALAERLAQADRPLRVKLGIDPTRPDLHLGHSVVLRKLRQFQDAGHVAILLIGDFTALVGDPTGQSEARPRLTPAEVEENARTYLEQAGKILDFETPGRLEVRRNSEWLAHLTLSELIELQAQMTVGQMLAKEDFAQRYQAGTPVYLHEFLYPLLQGYDSVALAADVELGGTDQRFNLLTGRDLQIWKGQAPQFCLTVPLLEGLDGYQKMSKSKNNYVGLTEDPLTMYSKLEKVPDHLVERYFELLTSVPLAELPQDPRQRQILLAKTLVAQFHSPAAAEEAQRTAQALVLDGILAETGSIPTFAIDGLSYPVKLSYILRECGLCKSAAEARRQIQGGAVRLDGQKVEDPDLEFAHASELAGRILQVGKKAFRRLVKGAD</sequence>
<protein>
    <recommendedName>
        <fullName evidence="1">Tyrosine--tRNA ligase</fullName>
        <ecNumber evidence="1">6.1.1.1</ecNumber>
    </recommendedName>
    <alternativeName>
        <fullName evidence="1">Tyrosyl-tRNA synthetase</fullName>
        <shortName evidence="1">TyrRS</shortName>
    </alternativeName>
</protein>
<keyword id="KW-0030">Aminoacyl-tRNA synthetase</keyword>
<keyword id="KW-0067">ATP-binding</keyword>
<keyword id="KW-0963">Cytoplasm</keyword>
<keyword id="KW-0436">Ligase</keyword>
<keyword id="KW-0547">Nucleotide-binding</keyword>
<keyword id="KW-0648">Protein biosynthesis</keyword>
<keyword id="KW-1185">Reference proteome</keyword>
<keyword id="KW-0694">RNA-binding</keyword>
<proteinExistence type="inferred from homology"/>